<dbReference type="EC" id="7.4.2.8" evidence="1"/>
<dbReference type="EMBL" id="AM263198">
    <property type="protein sequence ID" value="CAK19968.1"/>
    <property type="molecule type" value="Genomic_DNA"/>
</dbReference>
<dbReference type="RefSeq" id="WP_011701395.1">
    <property type="nucleotide sequence ID" value="NC_008555.1"/>
</dbReference>
<dbReference type="SMR" id="A0AG36"/>
<dbReference type="STRING" id="386043.lwe0550"/>
<dbReference type="GeneID" id="61188438"/>
<dbReference type="KEGG" id="lwe:lwe0550"/>
<dbReference type="eggNOG" id="COG0653">
    <property type="taxonomic scope" value="Bacteria"/>
</dbReference>
<dbReference type="HOGENOM" id="CLU_005314_3_0_9"/>
<dbReference type="OrthoDB" id="9805579at2"/>
<dbReference type="Proteomes" id="UP000000779">
    <property type="component" value="Chromosome"/>
</dbReference>
<dbReference type="GO" id="GO:0031522">
    <property type="term" value="C:cell envelope Sec protein transport complex"/>
    <property type="evidence" value="ECO:0007669"/>
    <property type="project" value="TreeGrafter"/>
</dbReference>
<dbReference type="GO" id="GO:0005829">
    <property type="term" value="C:cytosol"/>
    <property type="evidence" value="ECO:0007669"/>
    <property type="project" value="TreeGrafter"/>
</dbReference>
<dbReference type="GO" id="GO:0005886">
    <property type="term" value="C:plasma membrane"/>
    <property type="evidence" value="ECO:0007669"/>
    <property type="project" value="UniProtKB-SubCell"/>
</dbReference>
<dbReference type="GO" id="GO:0005524">
    <property type="term" value="F:ATP binding"/>
    <property type="evidence" value="ECO:0007669"/>
    <property type="project" value="UniProtKB-UniRule"/>
</dbReference>
<dbReference type="GO" id="GO:0008564">
    <property type="term" value="F:protein-exporting ATPase activity"/>
    <property type="evidence" value="ECO:0007669"/>
    <property type="project" value="UniProtKB-EC"/>
</dbReference>
<dbReference type="GO" id="GO:0065002">
    <property type="term" value="P:intracellular protein transmembrane transport"/>
    <property type="evidence" value="ECO:0007669"/>
    <property type="project" value="UniProtKB-UniRule"/>
</dbReference>
<dbReference type="GO" id="GO:0017038">
    <property type="term" value="P:protein import"/>
    <property type="evidence" value="ECO:0007669"/>
    <property type="project" value="InterPro"/>
</dbReference>
<dbReference type="GO" id="GO:0006605">
    <property type="term" value="P:protein targeting"/>
    <property type="evidence" value="ECO:0007669"/>
    <property type="project" value="UniProtKB-UniRule"/>
</dbReference>
<dbReference type="GO" id="GO:0043952">
    <property type="term" value="P:protein transport by the Sec complex"/>
    <property type="evidence" value="ECO:0007669"/>
    <property type="project" value="TreeGrafter"/>
</dbReference>
<dbReference type="CDD" id="cd17928">
    <property type="entry name" value="DEXDc_SecA"/>
    <property type="match status" value="1"/>
</dbReference>
<dbReference type="CDD" id="cd18803">
    <property type="entry name" value="SF2_C_secA"/>
    <property type="match status" value="1"/>
</dbReference>
<dbReference type="FunFam" id="3.40.50.300:FF:000429">
    <property type="entry name" value="Preprotein translocase subunit SecA"/>
    <property type="match status" value="1"/>
</dbReference>
<dbReference type="Gene3D" id="1.10.3060.10">
    <property type="entry name" value="Helical scaffold and wing domains of SecA"/>
    <property type="match status" value="1"/>
</dbReference>
<dbReference type="Gene3D" id="3.40.50.300">
    <property type="entry name" value="P-loop containing nucleotide triphosphate hydrolases"/>
    <property type="match status" value="3"/>
</dbReference>
<dbReference type="Gene3D" id="3.90.1440.10">
    <property type="entry name" value="SecA, preprotein cross-linking domain"/>
    <property type="match status" value="1"/>
</dbReference>
<dbReference type="HAMAP" id="MF_01382">
    <property type="entry name" value="SecA"/>
    <property type="match status" value="1"/>
</dbReference>
<dbReference type="InterPro" id="IPR014001">
    <property type="entry name" value="Helicase_ATP-bd"/>
</dbReference>
<dbReference type="InterPro" id="IPR001650">
    <property type="entry name" value="Helicase_C-like"/>
</dbReference>
<dbReference type="InterPro" id="IPR027417">
    <property type="entry name" value="P-loop_NTPase"/>
</dbReference>
<dbReference type="InterPro" id="IPR000185">
    <property type="entry name" value="SecA"/>
</dbReference>
<dbReference type="InterPro" id="IPR011115">
    <property type="entry name" value="SecA_DEAD"/>
</dbReference>
<dbReference type="InterPro" id="IPR014018">
    <property type="entry name" value="SecA_motor_DEAD"/>
</dbReference>
<dbReference type="InterPro" id="IPR011130">
    <property type="entry name" value="SecA_preprotein_X-link_dom"/>
</dbReference>
<dbReference type="InterPro" id="IPR044722">
    <property type="entry name" value="SecA_SF2_C"/>
</dbReference>
<dbReference type="InterPro" id="IPR011116">
    <property type="entry name" value="SecA_Wing/Scaffold"/>
</dbReference>
<dbReference type="InterPro" id="IPR036266">
    <property type="entry name" value="SecA_Wing/Scaffold_sf"/>
</dbReference>
<dbReference type="InterPro" id="IPR036670">
    <property type="entry name" value="SecA_X-link_sf"/>
</dbReference>
<dbReference type="NCBIfam" id="NF006630">
    <property type="entry name" value="PRK09200.1"/>
    <property type="match status" value="1"/>
</dbReference>
<dbReference type="NCBIfam" id="NF012136">
    <property type="entry name" value="SecA2_Lm"/>
    <property type="match status" value="1"/>
</dbReference>
<dbReference type="PANTHER" id="PTHR30612:SF0">
    <property type="entry name" value="CHLOROPLAST PROTEIN-TRANSPORTING ATPASE"/>
    <property type="match status" value="1"/>
</dbReference>
<dbReference type="PANTHER" id="PTHR30612">
    <property type="entry name" value="SECA INNER MEMBRANE COMPONENT OF SEC PROTEIN SECRETION SYSTEM"/>
    <property type="match status" value="1"/>
</dbReference>
<dbReference type="Pfam" id="PF21090">
    <property type="entry name" value="P-loop_SecA"/>
    <property type="match status" value="1"/>
</dbReference>
<dbReference type="Pfam" id="PF07517">
    <property type="entry name" value="SecA_DEAD"/>
    <property type="match status" value="1"/>
</dbReference>
<dbReference type="Pfam" id="PF01043">
    <property type="entry name" value="SecA_PP_bind"/>
    <property type="match status" value="1"/>
</dbReference>
<dbReference type="Pfam" id="PF07516">
    <property type="entry name" value="SecA_SW"/>
    <property type="match status" value="1"/>
</dbReference>
<dbReference type="PRINTS" id="PR00906">
    <property type="entry name" value="SECA"/>
</dbReference>
<dbReference type="SMART" id="SM00957">
    <property type="entry name" value="SecA_DEAD"/>
    <property type="match status" value="1"/>
</dbReference>
<dbReference type="SMART" id="SM00958">
    <property type="entry name" value="SecA_PP_bind"/>
    <property type="match status" value="1"/>
</dbReference>
<dbReference type="SUPFAM" id="SSF81886">
    <property type="entry name" value="Helical scaffold and wing domains of SecA"/>
    <property type="match status" value="1"/>
</dbReference>
<dbReference type="SUPFAM" id="SSF52540">
    <property type="entry name" value="P-loop containing nucleoside triphosphate hydrolases"/>
    <property type="match status" value="2"/>
</dbReference>
<dbReference type="SUPFAM" id="SSF81767">
    <property type="entry name" value="Pre-protein crosslinking domain of SecA"/>
    <property type="match status" value="1"/>
</dbReference>
<dbReference type="PROSITE" id="PS51196">
    <property type="entry name" value="SECA_MOTOR_DEAD"/>
    <property type="match status" value="1"/>
</dbReference>
<evidence type="ECO:0000255" key="1">
    <source>
        <dbReference type="HAMAP-Rule" id="MF_01382"/>
    </source>
</evidence>
<comment type="function">
    <text evidence="1">Part of the Sec protein translocase complex. Interacts with the SecYEG preprotein conducting channel. Has a central role in coupling the hydrolysis of ATP to the transfer of proteins into and across the cell membrane, serving as an ATP-driven molecular motor driving the stepwise translocation of polypeptide chains across the membrane.</text>
</comment>
<comment type="catalytic activity">
    <reaction evidence="1">
        <text>ATP + H2O + cellular proteinSide 1 = ADP + phosphate + cellular proteinSide 2.</text>
        <dbReference type="EC" id="7.4.2.8"/>
    </reaction>
</comment>
<comment type="subunit">
    <text evidence="1">Monomer and homodimer. Part of the essential Sec protein translocation apparatus which comprises SecA, SecYEG and auxiliary proteins SecDF. Other proteins may also be involved.</text>
</comment>
<comment type="subcellular location">
    <subcellularLocation>
        <location evidence="1">Cell membrane</location>
        <topology evidence="1">Peripheral membrane protein</topology>
        <orientation evidence="1">Cytoplasmic side</orientation>
    </subcellularLocation>
    <subcellularLocation>
        <location evidence="1">Cytoplasm</location>
    </subcellularLocation>
    <text evidence="1">Distribution is 50-50.</text>
</comment>
<comment type="similarity">
    <text evidence="1">Belongs to the SecA family.</text>
</comment>
<feature type="chain" id="PRO_0000318371" description="Protein translocase subunit SecA 2">
    <location>
        <begin position="1"/>
        <end position="776"/>
    </location>
</feature>
<feature type="binding site" evidence="1">
    <location>
        <position position="80"/>
    </location>
    <ligand>
        <name>ATP</name>
        <dbReference type="ChEBI" id="CHEBI:30616"/>
    </ligand>
</feature>
<feature type="binding site" evidence="1">
    <location>
        <begin position="98"/>
        <end position="102"/>
    </location>
    <ligand>
        <name>ATP</name>
        <dbReference type="ChEBI" id="CHEBI:30616"/>
    </ligand>
</feature>
<feature type="binding site" evidence="1">
    <location>
        <position position="486"/>
    </location>
    <ligand>
        <name>ATP</name>
        <dbReference type="ChEBI" id="CHEBI:30616"/>
    </ligand>
</feature>
<sequence>MKQNFDDRKIVKQYREIARQIVKKEGLYKNMDQDELREQTNYWREKFKTKEMSERDKINIFALAREAASRIIGLDAVVVQLIGALVLGDGKVAEMKTGEGKTLMSLFVMFIEVMRGNRVHLVTANEYLARRDREEIGQVLEYLGISVALNESDLDKDQKKAIYTADVIYGTASEFGFDYLRDNMVRQKEDKVQSGLDFVLIDEADSILIDEARTPLLISDRKEEDLSLYQTANKLVKTMLKDEYEIEEHKRFVWLNDAGIEKAQKFWGVESLYSAEGQAELRITMLLMRAHFLMHKDKDYVVLDDEVLIIDPHTGRALPGRRFNDGLHQAIEAKEEVEVKEESRTLATITIQNYFRMYKKISGMTGTAKTEEEEFRQIYNMDVVVIPTNLRINREDVPDDIFYTKKEKGRAIVYEVSWRYEKGQPTLIGTSSIKSNEWISGLLDAAGIPHQVLNAKNHAQEAEIIAKAGKRGMVTLATNMAGRGTDIKLDPDVHKLGGLAVIGTERHESRRIDLQLMGRSGRRGDPGFSKFMISLEDDLLEQFESKSWEKLSVKLKRKAPRDGKPVNSSKIHAVVVNAQKRLEGANYDIRKDLLSYDEVIDLQRKMVYKERDLLLERNKLGVSSEKILREVAEYAFIHPVDIEQEKLEKYYARQKELLGGTKFPVSFDEVSLMEPAEVVEKIVTWHKKERDKFPIETITAIEKEVYLNLMDQMWVMHLDAMVQLREGIHLRAYGQQDPLVMYQKEGAQLFEKFQADYHFYFAHALLELDPDGLVQG</sequence>
<gene>
    <name evidence="1" type="primary">secA2</name>
    <name type="ordered locus">lwe0550</name>
</gene>
<name>SECA2_LISW6</name>
<keyword id="KW-0067">ATP-binding</keyword>
<keyword id="KW-1003">Cell membrane</keyword>
<keyword id="KW-0963">Cytoplasm</keyword>
<keyword id="KW-0472">Membrane</keyword>
<keyword id="KW-0547">Nucleotide-binding</keyword>
<keyword id="KW-0653">Protein transport</keyword>
<keyword id="KW-1278">Translocase</keyword>
<keyword id="KW-0811">Translocation</keyword>
<keyword id="KW-0813">Transport</keyword>
<reference key="1">
    <citation type="journal article" date="2006" name="J. Bacteriol.">
        <title>Whole-genome sequence of Listeria welshimeri reveals common steps in genome reduction with Listeria innocua as compared to Listeria monocytogenes.</title>
        <authorList>
            <person name="Hain T."/>
            <person name="Steinweg C."/>
            <person name="Kuenne C.T."/>
            <person name="Billion A."/>
            <person name="Ghai R."/>
            <person name="Chatterjee S.S."/>
            <person name="Domann E."/>
            <person name="Kaerst U."/>
            <person name="Goesmann A."/>
            <person name="Bekel T."/>
            <person name="Bartels D."/>
            <person name="Kaiser O."/>
            <person name="Meyer F."/>
            <person name="Puehler A."/>
            <person name="Weisshaar B."/>
            <person name="Wehland J."/>
            <person name="Liang C."/>
            <person name="Dandekar T."/>
            <person name="Lampidis R."/>
            <person name="Kreft J."/>
            <person name="Goebel W."/>
            <person name="Chakraborty T."/>
        </authorList>
    </citation>
    <scope>NUCLEOTIDE SEQUENCE [LARGE SCALE GENOMIC DNA]</scope>
    <source>
        <strain>ATCC 35897 / DSM 20650 / CCUG 15529 / CIP 8149 / NCTC 11857 / SLCC 5334 / V8</strain>
    </source>
</reference>
<proteinExistence type="inferred from homology"/>
<accession>A0AG36</accession>
<protein>
    <recommendedName>
        <fullName evidence="1">Protein translocase subunit SecA 2</fullName>
        <ecNumber evidence="1">7.4.2.8</ecNumber>
    </recommendedName>
</protein>
<organism>
    <name type="scientific">Listeria welshimeri serovar 6b (strain ATCC 35897 / DSM 20650 / CCUG 15529 / CIP 8149 / NCTC 11857 / SLCC 5334 / V8)</name>
    <dbReference type="NCBI Taxonomy" id="386043"/>
    <lineage>
        <taxon>Bacteria</taxon>
        <taxon>Bacillati</taxon>
        <taxon>Bacillota</taxon>
        <taxon>Bacilli</taxon>
        <taxon>Bacillales</taxon>
        <taxon>Listeriaceae</taxon>
        <taxon>Listeria</taxon>
    </lineage>
</organism>